<keyword id="KW-0249">Electron transport</keyword>
<keyword id="KW-0349">Heme</keyword>
<keyword id="KW-0408">Iron</keyword>
<keyword id="KW-0472">Membrane</keyword>
<keyword id="KW-0479">Metal-binding</keyword>
<keyword id="KW-0602">Photosynthesis</keyword>
<keyword id="KW-0934">Plastid</keyword>
<keyword id="KW-0732">Signal</keyword>
<keyword id="KW-0793">Thylakoid</keyword>
<keyword id="KW-0812">Transmembrane</keyword>
<keyword id="KW-1133">Transmembrane helix</keyword>
<keyword id="KW-0813">Transport</keyword>
<evidence type="ECO:0000250" key="1"/>
<evidence type="ECO:0000255" key="2">
    <source>
        <dbReference type="HAMAP-Rule" id="MF_00610"/>
    </source>
</evidence>
<evidence type="ECO:0000305" key="3"/>
<name>CYF_CUSGR</name>
<proteinExistence type="inferred from homology"/>
<gene>
    <name evidence="2" type="primary">petA</name>
</gene>
<reference key="1">
    <citation type="journal article" date="2007" name="BMC Plant Biol.">
        <title>Complete DNA sequences of the plastid genomes of two parasitic flowering plant species, Cuscuta reflexa and Cuscuta gronovii.</title>
        <authorList>
            <person name="Funk H.T."/>
            <person name="Berg S."/>
            <person name="Krupinska K."/>
            <person name="Maier U.-G."/>
            <person name="Krause K."/>
        </authorList>
    </citation>
    <scope>NUCLEOTIDE SEQUENCE [LARGE SCALE GENOMIC DNA]</scope>
</reference>
<dbReference type="EMBL" id="AM711639">
    <property type="protein sequence ID" value="CAM98338.1"/>
    <property type="molecule type" value="Genomic_DNA"/>
</dbReference>
<dbReference type="RefSeq" id="YP_001430052.1">
    <property type="nucleotide sequence ID" value="NC_009765.1"/>
</dbReference>
<dbReference type="SMR" id="A7M910"/>
<dbReference type="GeneID" id="5536792"/>
<dbReference type="GO" id="GO:0009535">
    <property type="term" value="C:chloroplast thylakoid membrane"/>
    <property type="evidence" value="ECO:0007669"/>
    <property type="project" value="TreeGrafter"/>
</dbReference>
<dbReference type="GO" id="GO:0009055">
    <property type="term" value="F:electron transfer activity"/>
    <property type="evidence" value="ECO:0007669"/>
    <property type="project" value="UniProtKB-UniRule"/>
</dbReference>
<dbReference type="GO" id="GO:0020037">
    <property type="term" value="F:heme binding"/>
    <property type="evidence" value="ECO:0007669"/>
    <property type="project" value="InterPro"/>
</dbReference>
<dbReference type="GO" id="GO:0005506">
    <property type="term" value="F:iron ion binding"/>
    <property type="evidence" value="ECO:0007669"/>
    <property type="project" value="InterPro"/>
</dbReference>
<dbReference type="GO" id="GO:0015979">
    <property type="term" value="P:photosynthesis"/>
    <property type="evidence" value="ECO:0007669"/>
    <property type="project" value="UniProtKB-UniRule"/>
</dbReference>
<dbReference type="FunFam" id="1.20.5.700:FF:000001">
    <property type="entry name" value="Cytochrome f"/>
    <property type="match status" value="1"/>
</dbReference>
<dbReference type="FunFam" id="2.40.50.100:FF:000007">
    <property type="entry name" value="Cytochrome f"/>
    <property type="match status" value="1"/>
</dbReference>
<dbReference type="FunFam" id="2.60.40.830:FF:000001">
    <property type="entry name" value="Cytochrome f"/>
    <property type="match status" value="1"/>
</dbReference>
<dbReference type="Gene3D" id="2.40.50.100">
    <property type="match status" value="1"/>
</dbReference>
<dbReference type="Gene3D" id="2.60.40.830">
    <property type="entry name" value="Cytochrome f large domain"/>
    <property type="match status" value="1"/>
</dbReference>
<dbReference type="Gene3D" id="1.20.5.700">
    <property type="entry name" value="Single helix bin"/>
    <property type="match status" value="1"/>
</dbReference>
<dbReference type="HAMAP" id="MF_00610">
    <property type="entry name" value="Cytb6_f_cytF"/>
    <property type="match status" value="1"/>
</dbReference>
<dbReference type="InterPro" id="IPR024058">
    <property type="entry name" value="Cyt-f_TM"/>
</dbReference>
<dbReference type="InterPro" id="IPR002325">
    <property type="entry name" value="Cyt_f"/>
</dbReference>
<dbReference type="InterPro" id="IPR024094">
    <property type="entry name" value="Cyt_f_lg_dom"/>
</dbReference>
<dbReference type="InterPro" id="IPR036826">
    <property type="entry name" value="Cyt_f_lg_dom_sf"/>
</dbReference>
<dbReference type="InterPro" id="IPR011054">
    <property type="entry name" value="Rudment_hybrid_motif"/>
</dbReference>
<dbReference type="PANTHER" id="PTHR33288">
    <property type="match status" value="1"/>
</dbReference>
<dbReference type="PANTHER" id="PTHR33288:SF10">
    <property type="entry name" value="CYTOCHROME F"/>
    <property type="match status" value="1"/>
</dbReference>
<dbReference type="Pfam" id="PF01333">
    <property type="entry name" value="Apocytochr_F_C"/>
    <property type="match status" value="1"/>
</dbReference>
<dbReference type="Pfam" id="PF16639">
    <property type="entry name" value="Apocytochr_F_N"/>
    <property type="match status" value="1"/>
</dbReference>
<dbReference type="PRINTS" id="PR00610">
    <property type="entry name" value="CYTOCHROMEF"/>
</dbReference>
<dbReference type="SUPFAM" id="SSF103431">
    <property type="entry name" value="Cytochrome f subunit of the cytochrome b6f complex, transmembrane anchor"/>
    <property type="match status" value="1"/>
</dbReference>
<dbReference type="SUPFAM" id="SSF49441">
    <property type="entry name" value="Cytochrome f, large domain"/>
    <property type="match status" value="1"/>
</dbReference>
<dbReference type="SUPFAM" id="SSF51246">
    <property type="entry name" value="Rudiment single hybrid motif"/>
    <property type="match status" value="1"/>
</dbReference>
<dbReference type="PROSITE" id="PS51010">
    <property type="entry name" value="CYTF"/>
    <property type="match status" value="1"/>
</dbReference>
<protein>
    <recommendedName>
        <fullName evidence="2">Cytochrome f</fullName>
    </recommendedName>
</protein>
<organism>
    <name type="scientific">Cuscuta gronovii</name>
    <name type="common">Common dodder</name>
    <name type="synonym">Epithymum gronovii</name>
    <dbReference type="NCBI Taxonomy" id="35886"/>
    <lineage>
        <taxon>Eukaryota</taxon>
        <taxon>Viridiplantae</taxon>
        <taxon>Streptophyta</taxon>
        <taxon>Embryophyta</taxon>
        <taxon>Tracheophyta</taxon>
        <taxon>Spermatophyta</taxon>
        <taxon>Magnoliopsida</taxon>
        <taxon>eudicotyledons</taxon>
        <taxon>Gunneridae</taxon>
        <taxon>Pentapetalae</taxon>
        <taxon>asterids</taxon>
        <taxon>lamiids</taxon>
        <taxon>Solanales</taxon>
        <taxon>Convolvulaceae</taxon>
        <taxon>Cuscuteae</taxon>
        <taxon>Cuscuta</taxon>
        <taxon>Cuscuta subgen. Grammica</taxon>
        <taxon>Cuscuta sect. Oxycarpae</taxon>
    </lineage>
</organism>
<geneLocation type="plastid"/>
<comment type="function">
    <text evidence="2">Component of the cytochrome b6-f complex, which mediates electron transfer between photosystem II (PSII) and photosystem I (PSI), cyclic electron flow around PSI, and state transitions.</text>
</comment>
<comment type="cofactor">
    <cofactor evidence="2">
        <name>heme</name>
        <dbReference type="ChEBI" id="CHEBI:30413"/>
    </cofactor>
    <text evidence="2">Binds 1 heme group covalently.</text>
</comment>
<comment type="subunit">
    <text evidence="1">The 4 large subunits of the cytochrome b6-f complex are cytochrome b6, subunit IV (17 kDa polypeptide, petD), cytochrome f and the Rieske protein, while the 4 small subunits are PetG, PetL, PetM and PetN. The complex functions as a dimer (By similarity).</text>
</comment>
<comment type="subcellular location">
    <subcellularLocation>
        <location evidence="1">Plastid thylakoid membrane</location>
        <topology evidence="2">Single-pass membrane protein</topology>
    </subcellularLocation>
</comment>
<comment type="similarity">
    <text evidence="2">Belongs to the cytochrome f family.</text>
</comment>
<comment type="caution">
    <text evidence="3">Young tissue from this organism is photosynthetic and contains some thylakoids, although the photosynthetic activity does not exceed the light compensation point.</text>
</comment>
<sequence length="320" mass="35421">MHTKNLFYSRTQQITQYLSALLMMVILTRTSISSAYPLFAQQGYENPREATGRIVCANCHLANKPVNIEVPQAILPDTVFEAVVQIPYDLQLKQVLSNGKKGGLNVGAVLILPEGFELAPPDRISPELKEKIGNLYFQSYRPNIKNIFVVGPVPGQKYTKITFPILSPNPANNRRAHFLKYPIYVGGNRGRGQIYPDGSKSNNTVFNATASGRVKKIIRNQKGGYEIIINDGSDSNEVVNLLPPGLEPLVSEGESIKLDQPLTSNPNVGGFGQDVAEVVLQDPSRVQVLLFFFASIILAQIFLVLKKKQFEKVQLTKINL</sequence>
<accession>A7M910</accession>
<feature type="signal peptide" evidence="2">
    <location>
        <begin position="1"/>
        <end position="35"/>
    </location>
</feature>
<feature type="chain" id="PRO_0000342058" description="Cytochrome f">
    <location>
        <begin position="36"/>
        <end position="320"/>
    </location>
</feature>
<feature type="transmembrane region" description="Helical" evidence="2">
    <location>
        <begin position="286"/>
        <end position="306"/>
    </location>
</feature>
<feature type="binding site" description="axial binding residue" evidence="2">
    <location>
        <position position="36"/>
    </location>
    <ligand>
        <name>heme</name>
        <dbReference type="ChEBI" id="CHEBI:30413"/>
    </ligand>
    <ligandPart>
        <name>Fe</name>
        <dbReference type="ChEBI" id="CHEBI:18248"/>
    </ligandPart>
</feature>
<feature type="binding site" description="covalent" evidence="2">
    <location>
        <position position="56"/>
    </location>
    <ligand>
        <name>heme</name>
        <dbReference type="ChEBI" id="CHEBI:30413"/>
    </ligand>
</feature>
<feature type="binding site" description="covalent" evidence="2">
    <location>
        <position position="59"/>
    </location>
    <ligand>
        <name>heme</name>
        <dbReference type="ChEBI" id="CHEBI:30413"/>
    </ligand>
</feature>
<feature type="binding site" description="axial binding residue" evidence="2">
    <location>
        <position position="60"/>
    </location>
    <ligand>
        <name>heme</name>
        <dbReference type="ChEBI" id="CHEBI:30413"/>
    </ligand>
    <ligandPart>
        <name>Fe</name>
        <dbReference type="ChEBI" id="CHEBI:18248"/>
    </ligandPart>
</feature>